<keyword id="KW-1003">Cell membrane</keyword>
<keyword id="KW-0472">Membrane</keyword>
<keyword id="KW-0675">Receptor</keyword>
<keyword id="KW-1185">Reference proteome</keyword>
<keyword id="KW-0807">Transducer</keyword>
<keyword id="KW-0812">Transmembrane</keyword>
<keyword id="KW-1133">Transmembrane helix</keyword>
<accession>P84180</accession>
<accession>Q59E12</accession>
<proteinExistence type="evidence at transcript level"/>
<evidence type="ECO:0000250" key="1"/>
<evidence type="ECO:0000255" key="2"/>
<evidence type="ECO:0000269" key="3">
    <source>
    </source>
</evidence>
<evidence type="ECO:0000269" key="4">
    <source>
    </source>
</evidence>
<evidence type="ECO:0000269" key="5">
    <source>
    </source>
</evidence>
<evidence type="ECO:0000269" key="6">
    <source>
    </source>
</evidence>
<evidence type="ECO:0000269" key="7">
    <source>
    </source>
</evidence>
<evidence type="ECO:0000305" key="8"/>
<evidence type="ECO:0000312" key="9">
    <source>
        <dbReference type="FlyBase" id="FBgn0045500"/>
    </source>
</evidence>
<gene>
    <name evidence="9" type="primary">Gr22b</name>
    <name type="ORF">CG31931</name>
</gene>
<comment type="function">
    <text evidence="1">Probable gustatory receptor which mediates acceptance or avoidance behavior, depending on its substrates (By similarity). Seems to be involved in the sensing of bitter taste since it is expressed in neurons that mediate sensitivity to bitter compounds.</text>
</comment>
<comment type="subcellular location">
    <subcellularLocation>
        <location evidence="1">Cell membrane</location>
        <topology evidence="1">Multi-pass membrane protein</topology>
    </subcellularLocation>
</comment>
<comment type="tissue specificity">
    <text evidence="5 6 7">Expressed in taste bristles in the foreleg and labial palps. In larvae, is expressed in neurons of the dorsal and posterior pharyngeal sense organs. Expressed in taste neurons that mediate sensitivity to bitter compounds.</text>
</comment>
<comment type="similarity">
    <text evidence="8">Belongs to the insect chemoreceptor superfamily. Gustatory receptor (GR) family. Gr22e subfamily.</text>
</comment>
<reference evidence="8" key="1">
    <citation type="journal article" date="2000" name="Science">
        <title>The genome sequence of Drosophila melanogaster.</title>
        <authorList>
            <person name="Adams M.D."/>
            <person name="Celniker S.E."/>
            <person name="Holt R.A."/>
            <person name="Evans C.A."/>
            <person name="Gocayne J.D."/>
            <person name="Amanatides P.G."/>
            <person name="Scherer S.E."/>
            <person name="Li P.W."/>
            <person name="Hoskins R.A."/>
            <person name="Galle R.F."/>
            <person name="George R.A."/>
            <person name="Lewis S.E."/>
            <person name="Richards S."/>
            <person name="Ashburner M."/>
            <person name="Henderson S.N."/>
            <person name="Sutton G.G."/>
            <person name="Wortman J.R."/>
            <person name="Yandell M.D."/>
            <person name="Zhang Q."/>
            <person name="Chen L.X."/>
            <person name="Brandon R.C."/>
            <person name="Rogers Y.-H.C."/>
            <person name="Blazej R.G."/>
            <person name="Champe M."/>
            <person name="Pfeiffer B.D."/>
            <person name="Wan K.H."/>
            <person name="Doyle C."/>
            <person name="Baxter E.G."/>
            <person name="Helt G."/>
            <person name="Nelson C.R."/>
            <person name="Miklos G.L.G."/>
            <person name="Abril J.F."/>
            <person name="Agbayani A."/>
            <person name="An H.-J."/>
            <person name="Andrews-Pfannkoch C."/>
            <person name="Baldwin D."/>
            <person name="Ballew R.M."/>
            <person name="Basu A."/>
            <person name="Baxendale J."/>
            <person name="Bayraktaroglu L."/>
            <person name="Beasley E.M."/>
            <person name="Beeson K.Y."/>
            <person name="Benos P.V."/>
            <person name="Berman B.P."/>
            <person name="Bhandari D."/>
            <person name="Bolshakov S."/>
            <person name="Borkova D."/>
            <person name="Botchan M.R."/>
            <person name="Bouck J."/>
            <person name="Brokstein P."/>
            <person name="Brottier P."/>
            <person name="Burtis K.C."/>
            <person name="Busam D.A."/>
            <person name="Butler H."/>
            <person name="Cadieu E."/>
            <person name="Center A."/>
            <person name="Chandra I."/>
            <person name="Cherry J.M."/>
            <person name="Cawley S."/>
            <person name="Dahlke C."/>
            <person name="Davenport L.B."/>
            <person name="Davies P."/>
            <person name="de Pablos B."/>
            <person name="Delcher A."/>
            <person name="Deng Z."/>
            <person name="Mays A.D."/>
            <person name="Dew I."/>
            <person name="Dietz S.M."/>
            <person name="Dodson K."/>
            <person name="Doup L.E."/>
            <person name="Downes M."/>
            <person name="Dugan-Rocha S."/>
            <person name="Dunkov B.C."/>
            <person name="Dunn P."/>
            <person name="Durbin K.J."/>
            <person name="Evangelista C.C."/>
            <person name="Ferraz C."/>
            <person name="Ferriera S."/>
            <person name="Fleischmann W."/>
            <person name="Fosler C."/>
            <person name="Gabrielian A.E."/>
            <person name="Garg N.S."/>
            <person name="Gelbart W.M."/>
            <person name="Glasser K."/>
            <person name="Glodek A."/>
            <person name="Gong F."/>
            <person name="Gorrell J.H."/>
            <person name="Gu Z."/>
            <person name="Guan P."/>
            <person name="Harris M."/>
            <person name="Harris N.L."/>
            <person name="Harvey D.A."/>
            <person name="Heiman T.J."/>
            <person name="Hernandez J.R."/>
            <person name="Houck J."/>
            <person name="Hostin D."/>
            <person name="Houston K.A."/>
            <person name="Howland T.J."/>
            <person name="Wei M.-H."/>
            <person name="Ibegwam C."/>
            <person name="Jalali M."/>
            <person name="Kalush F."/>
            <person name="Karpen G.H."/>
            <person name="Ke Z."/>
            <person name="Kennison J.A."/>
            <person name="Ketchum K.A."/>
            <person name="Kimmel B.E."/>
            <person name="Kodira C.D."/>
            <person name="Kraft C.L."/>
            <person name="Kravitz S."/>
            <person name="Kulp D."/>
            <person name="Lai Z."/>
            <person name="Lasko P."/>
            <person name="Lei Y."/>
            <person name="Levitsky A.A."/>
            <person name="Li J.H."/>
            <person name="Li Z."/>
            <person name="Liang Y."/>
            <person name="Lin X."/>
            <person name="Liu X."/>
            <person name="Mattei B."/>
            <person name="McIntosh T.C."/>
            <person name="McLeod M.P."/>
            <person name="McPherson D."/>
            <person name="Merkulov G."/>
            <person name="Milshina N.V."/>
            <person name="Mobarry C."/>
            <person name="Morris J."/>
            <person name="Moshrefi A."/>
            <person name="Mount S.M."/>
            <person name="Moy M."/>
            <person name="Murphy B."/>
            <person name="Murphy L."/>
            <person name="Muzny D.M."/>
            <person name="Nelson D.L."/>
            <person name="Nelson D.R."/>
            <person name="Nelson K.A."/>
            <person name="Nixon K."/>
            <person name="Nusskern D.R."/>
            <person name="Pacleb J.M."/>
            <person name="Palazzolo M."/>
            <person name="Pittman G.S."/>
            <person name="Pan S."/>
            <person name="Pollard J."/>
            <person name="Puri V."/>
            <person name="Reese M.G."/>
            <person name="Reinert K."/>
            <person name="Remington K."/>
            <person name="Saunders R.D.C."/>
            <person name="Scheeler F."/>
            <person name="Shen H."/>
            <person name="Shue B.C."/>
            <person name="Siden-Kiamos I."/>
            <person name="Simpson M."/>
            <person name="Skupski M.P."/>
            <person name="Smith T.J."/>
            <person name="Spier E."/>
            <person name="Spradling A.C."/>
            <person name="Stapleton M."/>
            <person name="Strong R."/>
            <person name="Sun E."/>
            <person name="Svirskas R."/>
            <person name="Tector C."/>
            <person name="Turner R."/>
            <person name="Venter E."/>
            <person name="Wang A.H."/>
            <person name="Wang X."/>
            <person name="Wang Z.-Y."/>
            <person name="Wassarman D.A."/>
            <person name="Weinstock G.M."/>
            <person name="Weissenbach J."/>
            <person name="Williams S.M."/>
            <person name="Woodage T."/>
            <person name="Worley K.C."/>
            <person name="Wu D."/>
            <person name="Yang S."/>
            <person name="Yao Q.A."/>
            <person name="Ye J."/>
            <person name="Yeh R.-F."/>
            <person name="Zaveri J.S."/>
            <person name="Zhan M."/>
            <person name="Zhang G."/>
            <person name="Zhao Q."/>
            <person name="Zheng L."/>
            <person name="Zheng X.H."/>
            <person name="Zhong F.N."/>
            <person name="Zhong W."/>
            <person name="Zhou X."/>
            <person name="Zhu S.C."/>
            <person name="Zhu X."/>
            <person name="Smith H.O."/>
            <person name="Gibbs R.A."/>
            <person name="Myers E.W."/>
            <person name="Rubin G.M."/>
            <person name="Venter J.C."/>
        </authorList>
    </citation>
    <scope>NUCLEOTIDE SEQUENCE [LARGE SCALE GENOMIC DNA]</scope>
    <source>
        <strain evidence="3">Berkeley</strain>
    </source>
</reference>
<reference key="2">
    <citation type="journal article" date="2002" name="Genome Biol.">
        <title>Annotation of the Drosophila melanogaster euchromatic genome: a systematic review.</title>
        <authorList>
            <person name="Misra S."/>
            <person name="Crosby M.A."/>
            <person name="Mungall C.J."/>
            <person name="Matthews B.B."/>
            <person name="Campbell K.S."/>
            <person name="Hradecky P."/>
            <person name="Huang Y."/>
            <person name="Kaminker J.S."/>
            <person name="Millburn G.H."/>
            <person name="Prochnik S.E."/>
            <person name="Smith C.D."/>
            <person name="Tupy J.L."/>
            <person name="Whitfield E.J."/>
            <person name="Bayraktaroglu L."/>
            <person name="Berman B.P."/>
            <person name="Bettencourt B.R."/>
            <person name="Celniker S.E."/>
            <person name="de Grey A.D.N.J."/>
            <person name="Drysdale R.A."/>
            <person name="Harris N.L."/>
            <person name="Richter J."/>
            <person name="Russo S."/>
            <person name="Schroeder A.J."/>
            <person name="Shu S.Q."/>
            <person name="Stapleton M."/>
            <person name="Yamada C."/>
            <person name="Ashburner M."/>
            <person name="Gelbart W.M."/>
            <person name="Rubin G.M."/>
            <person name="Lewis S.E."/>
        </authorList>
    </citation>
    <scope>GENOME REANNOTATION</scope>
    <source>
        <strain>Berkeley</strain>
    </source>
</reference>
<reference evidence="8" key="3">
    <citation type="journal article" date="2003" name="Proc. Natl. Acad. Sci. U.S.A.">
        <title>Molecular evolution of the insect chemoreceptor gene superfamily in Drosophila melanogaster.</title>
        <authorList>
            <person name="Robertson H.M."/>
            <person name="Warr C.G."/>
            <person name="Carlson J.R."/>
        </authorList>
    </citation>
    <scope>IDENTIFICATION</scope>
    <source>
        <strain evidence="4">Oregon-R</strain>
    </source>
</reference>
<reference key="4">
    <citation type="journal article" date="2004" name="Curr. Biol.">
        <title>Taste perception and coding in Drosophila.</title>
        <authorList>
            <person name="Thorne N."/>
            <person name="Chromey C."/>
            <person name="Bray S."/>
            <person name="Amrein H."/>
        </authorList>
    </citation>
    <scope>TISSUE SPECIFICITY</scope>
</reference>
<reference key="5">
    <citation type="journal article" date="2005" name="Chem. Senses">
        <title>Function and expression of the Drosophila gr genes in the perception of sweet, bitter and pheromone compounds.</title>
        <authorList>
            <person name="Thorne N."/>
            <person name="Bray S."/>
            <person name="Amrein H."/>
        </authorList>
    </citation>
    <scope>TISSUE SPECIFICITY</scope>
</reference>
<reference key="6">
    <citation type="journal article" date="2011" name="J. Neurosci.">
        <title>Molecular and cellular organization of the taste system in the Drosophila larva.</title>
        <authorList>
            <person name="Kwon J.Y."/>
            <person name="Dahanukar A."/>
            <person name="Weiss L.A."/>
            <person name="Carlson J.R."/>
        </authorList>
    </citation>
    <scope>TISSUE SPECIFICITY</scope>
</reference>
<feature type="chain" id="PRO_0000216494" description="Putative gustatory receptor 22b">
    <location>
        <begin position="1"/>
        <end position="386"/>
    </location>
</feature>
<feature type="topological domain" description="Cytoplasmic" evidence="1">
    <location>
        <begin position="1"/>
        <end position="48"/>
    </location>
</feature>
<feature type="transmembrane region" description="Helical; Name=1" evidence="2">
    <location>
        <begin position="49"/>
        <end position="69"/>
    </location>
</feature>
<feature type="topological domain" description="Extracellular" evidence="1">
    <location>
        <begin position="70"/>
        <end position="89"/>
    </location>
</feature>
<feature type="transmembrane region" description="Helical; Name=2" evidence="2">
    <location>
        <begin position="90"/>
        <end position="110"/>
    </location>
</feature>
<feature type="topological domain" description="Cytoplasmic" evidence="1">
    <location>
        <begin position="111"/>
        <end position="155"/>
    </location>
</feature>
<feature type="transmembrane region" description="Helical; Name=3" evidence="2">
    <location>
        <begin position="156"/>
        <end position="176"/>
    </location>
</feature>
<feature type="topological domain" description="Extracellular" evidence="1">
    <location>
        <begin position="177"/>
        <end position="178"/>
    </location>
</feature>
<feature type="transmembrane region" description="Helical; Name=4" evidence="2">
    <location>
        <begin position="179"/>
        <end position="199"/>
    </location>
</feature>
<feature type="topological domain" description="Cytoplasmic" evidence="1">
    <location>
        <begin position="200"/>
        <end position="254"/>
    </location>
</feature>
<feature type="transmembrane region" description="Helical; Name=5" evidence="2">
    <location>
        <begin position="255"/>
        <end position="275"/>
    </location>
</feature>
<feature type="topological domain" description="Extracellular" evidence="1">
    <location>
        <begin position="276"/>
        <end position="282"/>
    </location>
</feature>
<feature type="transmembrane region" description="Helical; Name=6" evidence="2">
    <location>
        <begin position="283"/>
        <end position="303"/>
    </location>
</feature>
<feature type="topological domain" description="Cytoplasmic" evidence="1">
    <location>
        <begin position="304"/>
        <end position="363"/>
    </location>
</feature>
<feature type="transmembrane region" description="Helical; Name=7" evidence="2">
    <location>
        <begin position="364"/>
        <end position="384"/>
    </location>
</feature>
<feature type="topological domain" description="Extracellular" evidence="1">
    <location>
        <begin position="385"/>
        <end position="386"/>
    </location>
</feature>
<organism>
    <name type="scientific">Drosophila melanogaster</name>
    <name type="common">Fruit fly</name>
    <dbReference type="NCBI Taxonomy" id="7227"/>
    <lineage>
        <taxon>Eukaryota</taxon>
        <taxon>Metazoa</taxon>
        <taxon>Ecdysozoa</taxon>
        <taxon>Arthropoda</taxon>
        <taxon>Hexapoda</taxon>
        <taxon>Insecta</taxon>
        <taxon>Pterygota</taxon>
        <taxon>Neoptera</taxon>
        <taxon>Endopterygota</taxon>
        <taxon>Diptera</taxon>
        <taxon>Brachycera</taxon>
        <taxon>Muscomorpha</taxon>
        <taxon>Ephydroidea</taxon>
        <taxon>Drosophilidae</taxon>
        <taxon>Drosophila</taxon>
        <taxon>Sophophora</taxon>
    </lineage>
</organism>
<protein>
    <recommendedName>
        <fullName>Putative gustatory receptor 22b</fullName>
    </recommendedName>
</protein>
<name>GR22B_DROME</name>
<sequence length="386" mass="45462">MFGSSREIRPYLARQMLKTTLYGSWLLGIFPFTLDSGKRIRQLRRSRCLTLYGLVLNYFLIFTLIRLAFEYRKHKLEAFKRNPVLEMINVVIGIINVLSALIVHFMNFWGSRKVGEICNELLILEYQDFEGLNGRNCPNFNCFVIQKCLTILGQLLSFFTLNFALPGLEFHICLVLLSCLMEFSLNLNIMHYHVGVLLIYRYVWLINEQLKDLVSQLKLNPETDFSRIHQFLSLYKRLLELNRKLVIAYEYQMTLFIIAQLSGNIVVIYFLIVYGLSMRTYSIFLVAFPNSLLINIWDFWLCIAACDLTEKAGDETAIILKIFSDLEHRDDKLEMSVNEFAWLCSHRKFRFQLCGLFSMNCRMGFKMIITTFLYLVYLVQFDYMNL</sequence>
<dbReference type="EMBL" id="AE014134">
    <property type="protein sequence ID" value="AAX52653.1"/>
    <property type="molecule type" value="Genomic_DNA"/>
</dbReference>
<dbReference type="RefSeq" id="NP_001014456.1">
    <property type="nucleotide sequence ID" value="NM_001014456.1"/>
</dbReference>
<dbReference type="SMR" id="P84180"/>
<dbReference type="BioGRID" id="72915">
    <property type="interactions" value="1"/>
</dbReference>
<dbReference type="FunCoup" id="P84180">
    <property type="interactions" value="14"/>
</dbReference>
<dbReference type="STRING" id="7227.FBpp0099546"/>
<dbReference type="PaxDb" id="7227-FBpp0099546"/>
<dbReference type="EnsemblMetazoa" id="FBtr0100188">
    <property type="protein sequence ID" value="FBpp0099546"/>
    <property type="gene ID" value="FBgn0045500"/>
</dbReference>
<dbReference type="GeneID" id="117492"/>
<dbReference type="KEGG" id="dme:Dmel_CG31931"/>
<dbReference type="AGR" id="FB:FBgn0045500"/>
<dbReference type="CTD" id="117492"/>
<dbReference type="FlyBase" id="FBgn0045500">
    <property type="gene designation" value="Gr22b"/>
</dbReference>
<dbReference type="VEuPathDB" id="VectorBase:FBgn0045500"/>
<dbReference type="eggNOG" id="ENOG502T94A">
    <property type="taxonomic scope" value="Eukaryota"/>
</dbReference>
<dbReference type="GeneTree" id="ENSGT00940000170904"/>
<dbReference type="HOGENOM" id="CLU_033758_0_0_1"/>
<dbReference type="InParanoid" id="P84180"/>
<dbReference type="OMA" id="WLCSHRR"/>
<dbReference type="OrthoDB" id="8067175at2759"/>
<dbReference type="PhylomeDB" id="P84180"/>
<dbReference type="BioGRID-ORCS" id="117492">
    <property type="hits" value="0 hits in 1 CRISPR screen"/>
</dbReference>
<dbReference type="GenomeRNAi" id="117492"/>
<dbReference type="PRO" id="PR:P84180"/>
<dbReference type="Proteomes" id="UP000000803">
    <property type="component" value="Chromosome 2L"/>
</dbReference>
<dbReference type="GO" id="GO:0030424">
    <property type="term" value="C:axon"/>
    <property type="evidence" value="ECO:0000318"/>
    <property type="project" value="GO_Central"/>
</dbReference>
<dbReference type="GO" id="GO:0030425">
    <property type="term" value="C:dendrite"/>
    <property type="evidence" value="ECO:0000318"/>
    <property type="project" value="GO_Central"/>
</dbReference>
<dbReference type="GO" id="GO:0016020">
    <property type="term" value="C:membrane"/>
    <property type="evidence" value="ECO:0000255"/>
    <property type="project" value="FlyBase"/>
</dbReference>
<dbReference type="GO" id="GO:0043025">
    <property type="term" value="C:neuronal cell body"/>
    <property type="evidence" value="ECO:0000318"/>
    <property type="project" value="GO_Central"/>
</dbReference>
<dbReference type="GO" id="GO:0005886">
    <property type="term" value="C:plasma membrane"/>
    <property type="evidence" value="ECO:0000250"/>
    <property type="project" value="FlyBase"/>
</dbReference>
<dbReference type="GO" id="GO:0015276">
    <property type="term" value="F:ligand-gated monoatomic ion channel activity"/>
    <property type="evidence" value="ECO:0000250"/>
    <property type="project" value="FlyBase"/>
</dbReference>
<dbReference type="GO" id="GO:0008527">
    <property type="term" value="F:taste receptor activity"/>
    <property type="evidence" value="ECO:0000250"/>
    <property type="project" value="FlyBase"/>
</dbReference>
<dbReference type="GO" id="GO:0050912">
    <property type="term" value="P:detection of chemical stimulus involved in sensory perception of taste"/>
    <property type="evidence" value="ECO:0000250"/>
    <property type="project" value="FlyBase"/>
</dbReference>
<dbReference type="GO" id="GO:0034220">
    <property type="term" value="P:monoatomic ion transmembrane transport"/>
    <property type="evidence" value="ECO:0000250"/>
    <property type="project" value="FlyBase"/>
</dbReference>
<dbReference type="GO" id="GO:0007165">
    <property type="term" value="P:signal transduction"/>
    <property type="evidence" value="ECO:0007669"/>
    <property type="project" value="UniProtKB-KW"/>
</dbReference>
<dbReference type="InterPro" id="IPR013604">
    <property type="entry name" value="7TM_chemorcpt"/>
</dbReference>
<dbReference type="PANTHER" id="PTHR21143:SF131">
    <property type="entry name" value="GUSTATORY AND ODORANT RECEPTOR 63A-RELATED"/>
    <property type="match status" value="1"/>
</dbReference>
<dbReference type="PANTHER" id="PTHR21143">
    <property type="entry name" value="INVERTEBRATE GUSTATORY RECEPTOR"/>
    <property type="match status" value="1"/>
</dbReference>
<dbReference type="Pfam" id="PF08395">
    <property type="entry name" value="7tm_7"/>
    <property type="match status" value="1"/>
</dbReference>